<dbReference type="EC" id="3.1.4.12"/>
<dbReference type="EMBL" id="AE014296">
    <property type="protein sequence ID" value="AAF47741.2"/>
    <property type="molecule type" value="Genomic_DNA"/>
</dbReference>
<dbReference type="EMBL" id="AY051714">
    <property type="protein sequence ID" value="AAK93138.1"/>
    <property type="molecule type" value="mRNA"/>
</dbReference>
<dbReference type="RefSeq" id="NP_647790.1">
    <property type="nucleotide sequence ID" value="NM_139533.4"/>
</dbReference>
<dbReference type="SMR" id="Q9VZS6"/>
<dbReference type="BioGRID" id="63892">
    <property type="interactions" value="4"/>
</dbReference>
<dbReference type="DIP" id="DIP-18690N"/>
<dbReference type="FunCoup" id="Q9VZS6">
    <property type="interactions" value="347"/>
</dbReference>
<dbReference type="IntAct" id="Q9VZS6">
    <property type="interactions" value="3"/>
</dbReference>
<dbReference type="STRING" id="7227.FBpp0072907"/>
<dbReference type="PaxDb" id="7227-FBpp0072907"/>
<dbReference type="DNASU" id="38396"/>
<dbReference type="EnsemblMetazoa" id="FBtr0073043">
    <property type="protein sequence ID" value="FBpp0072907"/>
    <property type="gene ID" value="FBgn0035421"/>
</dbReference>
<dbReference type="GeneID" id="38396"/>
<dbReference type="KEGG" id="dme:Dmel_CG12034"/>
<dbReference type="UCSC" id="CG12034-RA">
    <property type="organism name" value="d. melanogaster"/>
</dbReference>
<dbReference type="AGR" id="FB:FBgn0035421"/>
<dbReference type="CTD" id="38396"/>
<dbReference type="FlyBase" id="FBgn0035421">
    <property type="gene designation" value="nSMase"/>
</dbReference>
<dbReference type="VEuPathDB" id="VectorBase:FBgn0035421"/>
<dbReference type="eggNOG" id="KOG3873">
    <property type="taxonomic scope" value="Eukaryota"/>
</dbReference>
<dbReference type="GeneTree" id="ENSGT00390000009166"/>
<dbReference type="HOGENOM" id="CLU_034001_1_0_1"/>
<dbReference type="InParanoid" id="Q9VZS6"/>
<dbReference type="OMA" id="LWTPNVG"/>
<dbReference type="OrthoDB" id="387657at2759"/>
<dbReference type="PhylomeDB" id="Q9VZS6"/>
<dbReference type="Reactome" id="R-DME-9840310">
    <property type="pathway name" value="Glycosphingolipid catabolism"/>
</dbReference>
<dbReference type="UniPathway" id="UPA00222"/>
<dbReference type="BioGRID-ORCS" id="38396">
    <property type="hits" value="0 hits in 3 CRISPR screens"/>
</dbReference>
<dbReference type="ChiTaRS" id="CG12034">
    <property type="organism name" value="fly"/>
</dbReference>
<dbReference type="GenomeRNAi" id="38396"/>
<dbReference type="PRO" id="PR:Q9VZS6"/>
<dbReference type="Proteomes" id="UP000000803">
    <property type="component" value="Chromosome 3L"/>
</dbReference>
<dbReference type="Bgee" id="FBgn0035421">
    <property type="expression patterns" value="Expressed in eye disc (Drosophila) and 94 other cell types or tissues"/>
</dbReference>
<dbReference type="GO" id="GO:0005901">
    <property type="term" value="C:caveola"/>
    <property type="evidence" value="ECO:0000318"/>
    <property type="project" value="GO_Central"/>
</dbReference>
<dbReference type="GO" id="GO:0071944">
    <property type="term" value="C:cell periphery"/>
    <property type="evidence" value="ECO:0000318"/>
    <property type="project" value="GO_Central"/>
</dbReference>
<dbReference type="GO" id="GO:0005783">
    <property type="term" value="C:endoplasmic reticulum"/>
    <property type="evidence" value="ECO:0000318"/>
    <property type="project" value="GO_Central"/>
</dbReference>
<dbReference type="GO" id="GO:0046872">
    <property type="term" value="F:metal ion binding"/>
    <property type="evidence" value="ECO:0007669"/>
    <property type="project" value="UniProtKB-KW"/>
</dbReference>
<dbReference type="GO" id="GO:0061751">
    <property type="term" value="F:neutral sphingomyelin phosphodiesterase activity"/>
    <property type="evidence" value="ECO:0000303"/>
    <property type="project" value="FlyBase"/>
</dbReference>
<dbReference type="GO" id="GO:0004767">
    <property type="term" value="F:sphingomyelin phosphodiesterase activity"/>
    <property type="evidence" value="ECO:0000318"/>
    <property type="project" value="GO_Central"/>
</dbReference>
<dbReference type="GO" id="GO:0046513">
    <property type="term" value="P:ceramide biosynthetic process"/>
    <property type="evidence" value="ECO:0000318"/>
    <property type="project" value="GO_Central"/>
</dbReference>
<dbReference type="GO" id="GO:0030149">
    <property type="term" value="P:sphingolipid catabolic process"/>
    <property type="evidence" value="ECO:0000318"/>
    <property type="project" value="GO_Central"/>
</dbReference>
<dbReference type="GO" id="GO:0006684">
    <property type="term" value="P:sphingomyelin metabolic process"/>
    <property type="evidence" value="ECO:0000318"/>
    <property type="project" value="GO_Central"/>
</dbReference>
<dbReference type="FunFam" id="3.60.10.10:FF:000094">
    <property type="entry name" value="Sphingomyelin phosphodiesterase 2"/>
    <property type="match status" value="1"/>
</dbReference>
<dbReference type="Gene3D" id="3.60.10.10">
    <property type="entry name" value="Endonuclease/exonuclease/phosphatase"/>
    <property type="match status" value="1"/>
</dbReference>
<dbReference type="InterPro" id="IPR036691">
    <property type="entry name" value="Endo/exonu/phosph_ase_sf"/>
</dbReference>
<dbReference type="InterPro" id="IPR005135">
    <property type="entry name" value="Endo/exonuclease/phosphatase"/>
</dbReference>
<dbReference type="InterPro" id="IPR038772">
    <property type="entry name" value="Sph/SMPD2-like"/>
</dbReference>
<dbReference type="PANTHER" id="PTHR16320:SF24">
    <property type="entry name" value="PHOSPHODIESTERASE, PUTATIVE-RELATED"/>
    <property type="match status" value="1"/>
</dbReference>
<dbReference type="PANTHER" id="PTHR16320">
    <property type="entry name" value="SPHINGOMYELINASE FAMILY MEMBER"/>
    <property type="match status" value="1"/>
</dbReference>
<dbReference type="Pfam" id="PF03372">
    <property type="entry name" value="Exo_endo_phos"/>
    <property type="match status" value="1"/>
</dbReference>
<dbReference type="SUPFAM" id="SSF56219">
    <property type="entry name" value="DNase I-like"/>
    <property type="match status" value="1"/>
</dbReference>
<gene>
    <name evidence="5" type="primary">nSMase</name>
    <name evidence="5" type="ORF">CG12034</name>
</gene>
<evidence type="ECO:0000250" key="1"/>
<evidence type="ECO:0000255" key="2"/>
<evidence type="ECO:0000256" key="3">
    <source>
        <dbReference type="SAM" id="MobiDB-lite"/>
    </source>
</evidence>
<evidence type="ECO:0000305" key="4"/>
<evidence type="ECO:0000312" key="5">
    <source>
        <dbReference type="FlyBase" id="FBgn0035421"/>
    </source>
</evidence>
<name>NSMA_DROME</name>
<accession>Q9VZS6</accession>
<accession>Q961B4</accession>
<protein>
    <recommendedName>
        <fullName>Putative neutral sphingomyelinase</fullName>
        <ecNumber>3.1.4.12</ecNumber>
    </recommendedName>
</protein>
<organism>
    <name type="scientific">Drosophila melanogaster</name>
    <name type="common">Fruit fly</name>
    <dbReference type="NCBI Taxonomy" id="7227"/>
    <lineage>
        <taxon>Eukaryota</taxon>
        <taxon>Metazoa</taxon>
        <taxon>Ecdysozoa</taxon>
        <taxon>Arthropoda</taxon>
        <taxon>Hexapoda</taxon>
        <taxon>Insecta</taxon>
        <taxon>Pterygota</taxon>
        <taxon>Neoptera</taxon>
        <taxon>Endopterygota</taxon>
        <taxon>Diptera</taxon>
        <taxon>Brachycera</taxon>
        <taxon>Muscomorpha</taxon>
        <taxon>Ephydroidea</taxon>
        <taxon>Drosophilidae</taxon>
        <taxon>Drosophila</taxon>
        <taxon>Sophophora</taxon>
    </lineage>
</organism>
<reference key="1">
    <citation type="journal article" date="2000" name="Science">
        <title>The genome sequence of Drosophila melanogaster.</title>
        <authorList>
            <person name="Adams M.D."/>
            <person name="Celniker S.E."/>
            <person name="Holt R.A."/>
            <person name="Evans C.A."/>
            <person name="Gocayne J.D."/>
            <person name="Amanatides P.G."/>
            <person name="Scherer S.E."/>
            <person name="Li P.W."/>
            <person name="Hoskins R.A."/>
            <person name="Galle R.F."/>
            <person name="George R.A."/>
            <person name="Lewis S.E."/>
            <person name="Richards S."/>
            <person name="Ashburner M."/>
            <person name="Henderson S.N."/>
            <person name="Sutton G.G."/>
            <person name="Wortman J.R."/>
            <person name="Yandell M.D."/>
            <person name="Zhang Q."/>
            <person name="Chen L.X."/>
            <person name="Brandon R.C."/>
            <person name="Rogers Y.-H.C."/>
            <person name="Blazej R.G."/>
            <person name="Champe M."/>
            <person name="Pfeiffer B.D."/>
            <person name="Wan K.H."/>
            <person name="Doyle C."/>
            <person name="Baxter E.G."/>
            <person name="Helt G."/>
            <person name="Nelson C.R."/>
            <person name="Miklos G.L.G."/>
            <person name="Abril J.F."/>
            <person name="Agbayani A."/>
            <person name="An H.-J."/>
            <person name="Andrews-Pfannkoch C."/>
            <person name="Baldwin D."/>
            <person name="Ballew R.M."/>
            <person name="Basu A."/>
            <person name="Baxendale J."/>
            <person name="Bayraktaroglu L."/>
            <person name="Beasley E.M."/>
            <person name="Beeson K.Y."/>
            <person name="Benos P.V."/>
            <person name="Berman B.P."/>
            <person name="Bhandari D."/>
            <person name="Bolshakov S."/>
            <person name="Borkova D."/>
            <person name="Botchan M.R."/>
            <person name="Bouck J."/>
            <person name="Brokstein P."/>
            <person name="Brottier P."/>
            <person name="Burtis K.C."/>
            <person name="Busam D.A."/>
            <person name="Butler H."/>
            <person name="Cadieu E."/>
            <person name="Center A."/>
            <person name="Chandra I."/>
            <person name="Cherry J.M."/>
            <person name="Cawley S."/>
            <person name="Dahlke C."/>
            <person name="Davenport L.B."/>
            <person name="Davies P."/>
            <person name="de Pablos B."/>
            <person name="Delcher A."/>
            <person name="Deng Z."/>
            <person name="Mays A.D."/>
            <person name="Dew I."/>
            <person name="Dietz S.M."/>
            <person name="Dodson K."/>
            <person name="Doup L.E."/>
            <person name="Downes M."/>
            <person name="Dugan-Rocha S."/>
            <person name="Dunkov B.C."/>
            <person name="Dunn P."/>
            <person name="Durbin K.J."/>
            <person name="Evangelista C.C."/>
            <person name="Ferraz C."/>
            <person name="Ferriera S."/>
            <person name="Fleischmann W."/>
            <person name="Fosler C."/>
            <person name="Gabrielian A.E."/>
            <person name="Garg N.S."/>
            <person name="Gelbart W.M."/>
            <person name="Glasser K."/>
            <person name="Glodek A."/>
            <person name="Gong F."/>
            <person name="Gorrell J.H."/>
            <person name="Gu Z."/>
            <person name="Guan P."/>
            <person name="Harris M."/>
            <person name="Harris N.L."/>
            <person name="Harvey D.A."/>
            <person name="Heiman T.J."/>
            <person name="Hernandez J.R."/>
            <person name="Houck J."/>
            <person name="Hostin D."/>
            <person name="Houston K.A."/>
            <person name="Howland T.J."/>
            <person name="Wei M.-H."/>
            <person name="Ibegwam C."/>
            <person name="Jalali M."/>
            <person name="Kalush F."/>
            <person name="Karpen G.H."/>
            <person name="Ke Z."/>
            <person name="Kennison J.A."/>
            <person name="Ketchum K.A."/>
            <person name="Kimmel B.E."/>
            <person name="Kodira C.D."/>
            <person name="Kraft C.L."/>
            <person name="Kravitz S."/>
            <person name="Kulp D."/>
            <person name="Lai Z."/>
            <person name="Lasko P."/>
            <person name="Lei Y."/>
            <person name="Levitsky A.A."/>
            <person name="Li J.H."/>
            <person name="Li Z."/>
            <person name="Liang Y."/>
            <person name="Lin X."/>
            <person name="Liu X."/>
            <person name="Mattei B."/>
            <person name="McIntosh T.C."/>
            <person name="McLeod M.P."/>
            <person name="McPherson D."/>
            <person name="Merkulov G."/>
            <person name="Milshina N.V."/>
            <person name="Mobarry C."/>
            <person name="Morris J."/>
            <person name="Moshrefi A."/>
            <person name="Mount S.M."/>
            <person name="Moy M."/>
            <person name="Murphy B."/>
            <person name="Murphy L."/>
            <person name="Muzny D.M."/>
            <person name="Nelson D.L."/>
            <person name="Nelson D.R."/>
            <person name="Nelson K.A."/>
            <person name="Nixon K."/>
            <person name="Nusskern D.R."/>
            <person name="Pacleb J.M."/>
            <person name="Palazzolo M."/>
            <person name="Pittman G.S."/>
            <person name="Pan S."/>
            <person name="Pollard J."/>
            <person name="Puri V."/>
            <person name="Reese M.G."/>
            <person name="Reinert K."/>
            <person name="Remington K."/>
            <person name="Saunders R.D.C."/>
            <person name="Scheeler F."/>
            <person name="Shen H."/>
            <person name="Shue B.C."/>
            <person name="Siden-Kiamos I."/>
            <person name="Simpson M."/>
            <person name="Skupski M.P."/>
            <person name="Smith T.J."/>
            <person name="Spier E."/>
            <person name="Spradling A.C."/>
            <person name="Stapleton M."/>
            <person name="Strong R."/>
            <person name="Sun E."/>
            <person name="Svirskas R."/>
            <person name="Tector C."/>
            <person name="Turner R."/>
            <person name="Venter E."/>
            <person name="Wang A.H."/>
            <person name="Wang X."/>
            <person name="Wang Z.-Y."/>
            <person name="Wassarman D.A."/>
            <person name="Weinstock G.M."/>
            <person name="Weissenbach J."/>
            <person name="Williams S.M."/>
            <person name="Woodage T."/>
            <person name="Worley K.C."/>
            <person name="Wu D."/>
            <person name="Yang S."/>
            <person name="Yao Q.A."/>
            <person name="Ye J."/>
            <person name="Yeh R.-F."/>
            <person name="Zaveri J.S."/>
            <person name="Zhan M."/>
            <person name="Zhang G."/>
            <person name="Zhao Q."/>
            <person name="Zheng L."/>
            <person name="Zheng X.H."/>
            <person name="Zhong F.N."/>
            <person name="Zhong W."/>
            <person name="Zhou X."/>
            <person name="Zhu S.C."/>
            <person name="Zhu X."/>
            <person name="Smith H.O."/>
            <person name="Gibbs R.A."/>
            <person name="Myers E.W."/>
            <person name="Rubin G.M."/>
            <person name="Venter J.C."/>
        </authorList>
    </citation>
    <scope>NUCLEOTIDE SEQUENCE [LARGE SCALE GENOMIC DNA]</scope>
    <source>
        <strain>Berkeley</strain>
    </source>
</reference>
<reference key="2">
    <citation type="journal article" date="2002" name="Genome Biol.">
        <title>Annotation of the Drosophila melanogaster euchromatic genome: a systematic review.</title>
        <authorList>
            <person name="Misra S."/>
            <person name="Crosby M.A."/>
            <person name="Mungall C.J."/>
            <person name="Matthews B.B."/>
            <person name="Campbell K.S."/>
            <person name="Hradecky P."/>
            <person name="Huang Y."/>
            <person name="Kaminker J.S."/>
            <person name="Millburn G.H."/>
            <person name="Prochnik S.E."/>
            <person name="Smith C.D."/>
            <person name="Tupy J.L."/>
            <person name="Whitfield E.J."/>
            <person name="Bayraktaroglu L."/>
            <person name="Berman B.P."/>
            <person name="Bettencourt B.R."/>
            <person name="Celniker S.E."/>
            <person name="de Grey A.D.N.J."/>
            <person name="Drysdale R.A."/>
            <person name="Harris N.L."/>
            <person name="Richter J."/>
            <person name="Russo S."/>
            <person name="Schroeder A.J."/>
            <person name="Shu S.Q."/>
            <person name="Stapleton M."/>
            <person name="Yamada C."/>
            <person name="Ashburner M."/>
            <person name="Gelbart W.M."/>
            <person name="Rubin G.M."/>
            <person name="Lewis S.E."/>
        </authorList>
    </citation>
    <scope>GENOME REANNOTATION</scope>
    <source>
        <strain>Berkeley</strain>
    </source>
</reference>
<reference key="3">
    <citation type="journal article" date="2002" name="Genome Biol.">
        <title>A Drosophila full-length cDNA resource.</title>
        <authorList>
            <person name="Stapleton M."/>
            <person name="Carlson J.W."/>
            <person name="Brokstein P."/>
            <person name="Yu C."/>
            <person name="Champe M."/>
            <person name="George R.A."/>
            <person name="Guarin H."/>
            <person name="Kronmiller B."/>
            <person name="Pacleb J.M."/>
            <person name="Park S."/>
            <person name="Wan K.H."/>
            <person name="Rubin G.M."/>
            <person name="Celniker S.E."/>
        </authorList>
    </citation>
    <scope>NUCLEOTIDE SEQUENCE [LARGE SCALE MRNA]</scope>
    <source>
        <strain>Berkeley</strain>
        <tissue>Embryo</tissue>
    </source>
</reference>
<sequence length="442" mass="49643">MLLLELNILTLNIWGIPYVSSDRRPRIDAICKELASGKYDIVSLQEVWAQEDSELLQKGTEAVLPHSHYFHSGVMGAGLLVLSKYPILGTLFHAWSVNGYFHRIQHADWFGGKGVGLCRILVGGQMVHLYNAHLHAEYDNANDEYKTHRVIQAFDTAQFIEATRGNSALQILAGDLNAQPQDISYKVLLYTSKMLDSCDSDSFRTNECEHNSYTSKQARERNPLGIRIDHIFVRGGDHVNAEIAEYKLPFPERVPGEKFSFSDHEAVMAKLKLFKLEPRSEEPVATIEVNCLVEDGETCSVREVGAGDALTGEDDQSSQHQPEIQCNGSSTSIQSMPAARTAALLEALALCDASLLQLNTDRILYYSAATFLFVLLVLLVEFTAPVGMRTIFLLLKFIVFGVILFCVFMASIWNYMERNGVLQGKKSMEVMLHHAQKYEYFY</sequence>
<feature type="chain" id="PRO_0000075690" description="Putative neutral sphingomyelinase">
    <location>
        <begin position="1"/>
        <end position="442"/>
    </location>
</feature>
<feature type="transmembrane region" description="Helical" evidence="2">
    <location>
        <begin position="362"/>
        <end position="384"/>
    </location>
</feature>
<feature type="transmembrane region" description="Helical" evidence="2">
    <location>
        <begin position="391"/>
        <end position="413"/>
    </location>
</feature>
<feature type="region of interest" description="Disordered" evidence="3">
    <location>
        <begin position="309"/>
        <end position="330"/>
    </location>
</feature>
<feature type="compositionally biased region" description="Polar residues" evidence="3">
    <location>
        <begin position="318"/>
        <end position="330"/>
    </location>
</feature>
<feature type="active site" description="Proton acceptor" evidence="1">
    <location>
        <position position="264"/>
    </location>
</feature>
<feature type="binding site" evidence="1">
    <location>
        <position position="46"/>
    </location>
    <ligand>
        <name>Mg(2+)</name>
        <dbReference type="ChEBI" id="CHEBI:18420"/>
    </ligand>
</feature>
<feature type="site" description="Important for substrate recognition" evidence="1">
    <location>
        <position position="177"/>
    </location>
</feature>
<comment type="catalytic activity">
    <reaction>
        <text>a sphingomyelin + H2O = phosphocholine + an N-acylsphing-4-enine + H(+)</text>
        <dbReference type="Rhea" id="RHEA:19253"/>
        <dbReference type="ChEBI" id="CHEBI:15377"/>
        <dbReference type="ChEBI" id="CHEBI:15378"/>
        <dbReference type="ChEBI" id="CHEBI:17636"/>
        <dbReference type="ChEBI" id="CHEBI:52639"/>
        <dbReference type="ChEBI" id="CHEBI:295975"/>
        <dbReference type="EC" id="3.1.4.12"/>
    </reaction>
</comment>
<comment type="pathway">
    <text>Lipid metabolism; sphingolipid metabolism.</text>
</comment>
<comment type="subcellular location">
    <subcellularLocation>
        <location evidence="4">Membrane</location>
        <topology evidence="4">Multi-pass membrane protein</topology>
    </subcellularLocation>
</comment>
<comment type="similarity">
    <text evidence="4">Belongs to the neutral sphingomyelinase family.</text>
</comment>
<keyword id="KW-0378">Hydrolase</keyword>
<keyword id="KW-0443">Lipid metabolism</keyword>
<keyword id="KW-0460">Magnesium</keyword>
<keyword id="KW-0472">Membrane</keyword>
<keyword id="KW-0479">Metal-binding</keyword>
<keyword id="KW-1185">Reference proteome</keyword>
<keyword id="KW-0746">Sphingolipid metabolism</keyword>
<keyword id="KW-0812">Transmembrane</keyword>
<keyword id="KW-1133">Transmembrane helix</keyword>
<proteinExistence type="evidence at transcript level"/>